<keyword id="KW-0446">Lipid-binding</keyword>
<keyword id="KW-0496">Mitochondrion</keyword>
<keyword id="KW-1185">Reference proteome</keyword>
<keyword id="KW-0809">Transit peptide</keyword>
<keyword id="KW-0831">Ubiquinone biosynthesis</keyword>
<evidence type="ECO:0000250" key="1">
    <source>
        <dbReference type="UniProtKB" id="O75208"/>
    </source>
</evidence>
<evidence type="ECO:0000250" key="2">
    <source>
        <dbReference type="UniProtKB" id="Q05779"/>
    </source>
</evidence>
<evidence type="ECO:0000255" key="3"/>
<evidence type="ECO:0000305" key="4"/>
<comment type="function">
    <text evidence="1 2">Membrane-associated protein that warps the membrane surface to access and bind aromatic isoprenes with high specificity, including ubiquinone (CoQ) isoprene intermediates and presents them directly to COQ7, therefore facilitating the COQ7-mediated hydroxylase step. Participates in the biosynthesis of coenzyme Q, also named ubiquinone, an essential lipid-soluble electron transporter for aerobic cellular respiration.</text>
</comment>
<comment type="pathway">
    <text evidence="2">Cofactor biosynthesis; ubiquinone biosynthesis.</text>
</comment>
<comment type="subcellular location">
    <subcellularLocation>
        <location evidence="2">Mitochondrion</location>
    </subcellularLocation>
</comment>
<comment type="similarity">
    <text evidence="4">Belongs to the COQ9 family.</text>
</comment>
<reference key="1">
    <citation type="journal article" date="2004" name="Science">
        <title>The Ashbya gossypii genome as a tool for mapping the ancient Saccharomyces cerevisiae genome.</title>
        <authorList>
            <person name="Dietrich F.S."/>
            <person name="Voegeli S."/>
            <person name="Brachat S."/>
            <person name="Lerch A."/>
            <person name="Gates K."/>
            <person name="Steiner S."/>
            <person name="Mohr C."/>
            <person name="Poehlmann R."/>
            <person name="Luedi P."/>
            <person name="Choi S."/>
            <person name="Wing R.A."/>
            <person name="Flavier A."/>
            <person name="Gaffney T.D."/>
            <person name="Philippsen P."/>
        </authorList>
    </citation>
    <scope>NUCLEOTIDE SEQUENCE [LARGE SCALE GENOMIC DNA]</scope>
    <source>
        <strain>ATCC 10895 / CBS 109.51 / FGSC 9923 / NRRL Y-1056</strain>
    </source>
</reference>
<reference key="2">
    <citation type="journal article" date="2013" name="G3 (Bethesda)">
        <title>Genomes of Ashbya fungi isolated from insects reveal four mating-type loci, numerous translocations, lack of transposons, and distinct gene duplications.</title>
        <authorList>
            <person name="Dietrich F.S."/>
            <person name="Voegeli S."/>
            <person name="Kuo S."/>
            <person name="Philippsen P."/>
        </authorList>
    </citation>
    <scope>GENOME REANNOTATION</scope>
    <source>
        <strain>ATCC 10895 / CBS 109.51 / FGSC 9923 / NRRL Y-1056</strain>
    </source>
</reference>
<feature type="transit peptide" description="Mitochondrion" evidence="3">
    <location>
        <begin position="1"/>
        <end position="58"/>
    </location>
</feature>
<feature type="chain" id="PRO_0000227685" description="Ubiquinone biosynthesis protein COQ9, mitochondrial">
    <location>
        <begin position="59"/>
        <end position="246"/>
    </location>
</feature>
<feature type="binding site" evidence="1">
    <location>
        <begin position="175"/>
        <end position="178"/>
    </location>
    <ligand>
        <name>a 1,2-diacylglycero-3-phosphoethanolamine</name>
        <dbReference type="ChEBI" id="CHEBI:57613"/>
    </ligand>
</feature>
<protein>
    <recommendedName>
        <fullName>Ubiquinone biosynthesis protein COQ9, mitochondrial</fullName>
    </recommendedName>
</protein>
<sequence>MFRVCRRLYHPNTLEHAVGNRLRPLAYEQDSPQYKVLQRALEAHVPVLGFNERAIVRAAGDLGYGSAVLSALAAPNSPALLNVPSAVLELVKFHLVTKRVALADAAAQGNVSMEQLFLQRVEADRPLAGQLTQLLSILSLPGEFLVNTAMPELFRLSDDLIYYSGEKDHPDLAWYSKRAAVAMAYVSTNLFMARDRSPALEETLHFARRRLQQVDSLGTAYNNVEEFAWYQLLMAMNLVKSQLTRG</sequence>
<accession>Q75CR6</accession>
<proteinExistence type="inferred from homology"/>
<gene>
    <name type="primary">COQ9</name>
    <name type="ordered locus">ACL147W</name>
</gene>
<dbReference type="EMBL" id="AE016816">
    <property type="protein sequence ID" value="AAS51081.1"/>
    <property type="molecule type" value="Genomic_DNA"/>
</dbReference>
<dbReference type="RefSeq" id="NP_983257.1">
    <property type="nucleotide sequence ID" value="NM_208610.1"/>
</dbReference>
<dbReference type="SMR" id="Q75CR6"/>
<dbReference type="FunCoup" id="Q75CR6">
    <property type="interactions" value="261"/>
</dbReference>
<dbReference type="STRING" id="284811.Q75CR6"/>
<dbReference type="EnsemblFungi" id="AAS51081">
    <property type="protein sequence ID" value="AAS51081"/>
    <property type="gene ID" value="AGOS_ACL147W"/>
</dbReference>
<dbReference type="GeneID" id="4619377"/>
<dbReference type="KEGG" id="ago:AGOS_ACL147W"/>
<dbReference type="eggNOG" id="KOG2969">
    <property type="taxonomic scope" value="Eukaryota"/>
</dbReference>
<dbReference type="HOGENOM" id="CLU_057411_1_1_1"/>
<dbReference type="InParanoid" id="Q75CR6"/>
<dbReference type="OMA" id="SELFMAQ"/>
<dbReference type="OrthoDB" id="619536at2759"/>
<dbReference type="UniPathway" id="UPA00232"/>
<dbReference type="Proteomes" id="UP000000591">
    <property type="component" value="Chromosome III"/>
</dbReference>
<dbReference type="GO" id="GO:0005743">
    <property type="term" value="C:mitochondrial inner membrane"/>
    <property type="evidence" value="ECO:0000318"/>
    <property type="project" value="GO_Central"/>
</dbReference>
<dbReference type="GO" id="GO:0032991">
    <property type="term" value="C:protein-containing complex"/>
    <property type="evidence" value="ECO:0007669"/>
    <property type="project" value="EnsemblFungi"/>
</dbReference>
<dbReference type="GO" id="GO:0008289">
    <property type="term" value="F:lipid binding"/>
    <property type="evidence" value="ECO:0000318"/>
    <property type="project" value="GO_Central"/>
</dbReference>
<dbReference type="GO" id="GO:0006744">
    <property type="term" value="P:ubiquinone biosynthetic process"/>
    <property type="evidence" value="ECO:0000318"/>
    <property type="project" value="GO_Central"/>
</dbReference>
<dbReference type="InterPro" id="IPR013718">
    <property type="entry name" value="COQ9_C"/>
</dbReference>
<dbReference type="InterPro" id="IPR012762">
    <property type="entry name" value="Ubiq_biosynth_COQ9"/>
</dbReference>
<dbReference type="NCBIfam" id="TIGR02396">
    <property type="entry name" value="diverge_rpsU"/>
    <property type="match status" value="1"/>
</dbReference>
<dbReference type="PANTHER" id="PTHR21427">
    <property type="entry name" value="UBIQUINONE BIOSYNTHESIS PROTEIN COQ9, MITOCHONDRIAL"/>
    <property type="match status" value="1"/>
</dbReference>
<dbReference type="PANTHER" id="PTHR21427:SF19">
    <property type="entry name" value="UBIQUINONE BIOSYNTHESIS PROTEIN COQ9, MITOCHONDRIAL"/>
    <property type="match status" value="1"/>
</dbReference>
<dbReference type="Pfam" id="PF08511">
    <property type="entry name" value="COQ9"/>
    <property type="match status" value="1"/>
</dbReference>
<name>COQ9_EREGS</name>
<organism>
    <name type="scientific">Eremothecium gossypii (strain ATCC 10895 / CBS 109.51 / FGSC 9923 / NRRL Y-1056)</name>
    <name type="common">Yeast</name>
    <name type="synonym">Ashbya gossypii</name>
    <dbReference type="NCBI Taxonomy" id="284811"/>
    <lineage>
        <taxon>Eukaryota</taxon>
        <taxon>Fungi</taxon>
        <taxon>Dikarya</taxon>
        <taxon>Ascomycota</taxon>
        <taxon>Saccharomycotina</taxon>
        <taxon>Saccharomycetes</taxon>
        <taxon>Saccharomycetales</taxon>
        <taxon>Saccharomycetaceae</taxon>
        <taxon>Eremothecium</taxon>
    </lineage>
</organism>